<reference key="1">
    <citation type="submission" date="2006-06" db="EMBL/GenBank/DDBJ databases">
        <authorList>
            <consortium name="NIH - Mammalian Gene Collection (MGC) project"/>
        </authorList>
    </citation>
    <scope>NUCLEOTIDE SEQUENCE [LARGE SCALE MRNA]</scope>
    <source>
        <strain>Hereford</strain>
        <tissue>Thalamus</tissue>
    </source>
</reference>
<reference key="2">
    <citation type="journal article" date="2005" name="BMC Genomics">
        <title>Characterization of 954 bovine full-CDS cDNA sequences.</title>
        <authorList>
            <person name="Harhay G.P."/>
            <person name="Sonstegard T.S."/>
            <person name="Keele J.W."/>
            <person name="Heaton M.P."/>
            <person name="Clawson M.L."/>
            <person name="Snelling W.M."/>
            <person name="Wiedmann R.T."/>
            <person name="Van Tassell C.P."/>
            <person name="Smith T.P.L."/>
        </authorList>
    </citation>
    <scope>NUCLEOTIDE SEQUENCE [LARGE SCALE MRNA] OF 8-548</scope>
</reference>
<keyword id="KW-0325">Glycoprotein</keyword>
<keyword id="KW-0333">Golgi apparatus</keyword>
<keyword id="KW-0472">Membrane</keyword>
<keyword id="KW-1185">Reference proteome</keyword>
<keyword id="KW-0732">Signal</keyword>
<keyword id="KW-0812">Transmembrane</keyword>
<keyword id="KW-1133">Transmembrane helix</keyword>
<dbReference type="EMBL" id="BC118184">
    <property type="protein sequence ID" value="AAI18185.1"/>
    <property type="molecule type" value="mRNA"/>
</dbReference>
<dbReference type="EMBL" id="BT026243">
    <property type="protein sequence ID" value="ABG67082.1"/>
    <property type="molecule type" value="mRNA"/>
</dbReference>
<dbReference type="RefSeq" id="NP_001068801.1">
    <property type="nucleotide sequence ID" value="NM_001075333.1"/>
</dbReference>
<dbReference type="FunCoup" id="Q148L1">
    <property type="interactions" value="2292"/>
</dbReference>
<dbReference type="STRING" id="9913.ENSBTAP00000067674"/>
<dbReference type="GlyCosmos" id="Q148L1">
    <property type="glycosylation" value="6 sites, No reported glycans"/>
</dbReference>
<dbReference type="GlyGen" id="Q148L1">
    <property type="glycosylation" value="6 sites"/>
</dbReference>
<dbReference type="PaxDb" id="9913-ENSBTAP00000022987"/>
<dbReference type="GeneID" id="507830"/>
<dbReference type="KEGG" id="bta:507830"/>
<dbReference type="CTD" id="56927"/>
<dbReference type="VEuPathDB" id="HostDB:ENSBTAG00000017291"/>
<dbReference type="eggNOG" id="KOG2569">
    <property type="taxonomic scope" value="Eukaryota"/>
</dbReference>
<dbReference type="HOGENOM" id="CLU_020277_0_0_1"/>
<dbReference type="InParanoid" id="Q148L1"/>
<dbReference type="OMA" id="RRGLGCW"/>
<dbReference type="OrthoDB" id="29657at2759"/>
<dbReference type="Proteomes" id="UP000009136">
    <property type="component" value="Chromosome 7"/>
</dbReference>
<dbReference type="Bgee" id="ENSBTAG00000017291">
    <property type="expression patterns" value="Expressed in urinary bladder and 104 other cell types or tissues"/>
</dbReference>
<dbReference type="GO" id="GO:0033106">
    <property type="term" value="C:cis-Golgi network membrane"/>
    <property type="evidence" value="ECO:0000250"/>
    <property type="project" value="UniProtKB"/>
</dbReference>
<dbReference type="GO" id="GO:0005794">
    <property type="term" value="C:Golgi apparatus"/>
    <property type="evidence" value="ECO:0000250"/>
    <property type="project" value="UniProtKB"/>
</dbReference>
<dbReference type="GO" id="GO:0000139">
    <property type="term" value="C:Golgi membrane"/>
    <property type="evidence" value="ECO:0007669"/>
    <property type="project" value="UniProtKB-SubCell"/>
</dbReference>
<dbReference type="GO" id="GO:0016020">
    <property type="term" value="C:membrane"/>
    <property type="evidence" value="ECO:0000318"/>
    <property type="project" value="GO_Central"/>
</dbReference>
<dbReference type="GO" id="GO:0034122">
    <property type="term" value="P:negative regulation of toll-like receptor signaling pathway"/>
    <property type="evidence" value="ECO:0000250"/>
    <property type="project" value="UniProtKB"/>
</dbReference>
<dbReference type="GO" id="GO:0050776">
    <property type="term" value="P:regulation of immune response"/>
    <property type="evidence" value="ECO:0000250"/>
    <property type="project" value="UniProtKB"/>
</dbReference>
<dbReference type="InterPro" id="IPR053937">
    <property type="entry name" value="GOST_TM"/>
</dbReference>
<dbReference type="InterPro" id="IPR009637">
    <property type="entry name" value="GPR107/GPR108-like"/>
</dbReference>
<dbReference type="PANTHER" id="PTHR21229">
    <property type="entry name" value="LUNG SEVEN TRANSMEMBRANE RECEPTOR"/>
    <property type="match status" value="1"/>
</dbReference>
<dbReference type="PANTHER" id="PTHR21229:SF11">
    <property type="entry name" value="PROTEIN GPR108"/>
    <property type="match status" value="1"/>
</dbReference>
<dbReference type="Pfam" id="PF06814">
    <property type="entry name" value="GOST_TM"/>
    <property type="match status" value="1"/>
</dbReference>
<comment type="function">
    <text evidence="1">May play a role in intracellular immune modulation by activating NF-kappaB response and attenuating Toll-like-receptor response.</text>
</comment>
<comment type="subcellular location">
    <subcellularLocation>
        <location evidence="1">Golgi apparatus</location>
        <location evidence="1">cis-Golgi network membrane</location>
        <topology evidence="1">Multi-pass membrane protein</topology>
    </subcellularLocation>
    <subcellularLocation>
        <location evidence="2">Golgi apparatus</location>
        <location evidence="2">trans-Golgi network membrane</location>
        <topology evidence="1">Multi-pass membrane protein</topology>
    </subcellularLocation>
    <subcellularLocation>
        <location evidence="2">Golgi apparatus membrane</location>
        <topology evidence="3">Multi-pass membrane protein</topology>
    </subcellularLocation>
    <text evidence="1">Colocalizes with TLR3, -7, -4, and -9.</text>
</comment>
<comment type="similarity">
    <text evidence="5">Belongs to the LU7TM family.</text>
</comment>
<sequence length="548" mass="61403">MAVSERRGLGRGSPAEWGPWLLLLLLLGGSSGRIHRLTLTGEKRADIQLNSFGFYTNGSLEVNLSLLRLGRQDTEEKAPLVGFSLTRVRSGSIRSYSNRDSHECPLRKNSSSLLVLFLINTKDLEVQVRKYGEQKKLFISAGLLPESPSKPGLPKSEHMVTPKVDHAGTTAAPDKAKSKPTGLQGDRQGVSGKDQELVLGLGHLNNSYNFSFHVVIGSRAEEGQYNLNFHNCDNSVPGREQPFDITVMIREKNPEGYLSAAEIPLFKLYMVMSACFLGAGIFWVSILCKNTYNVFKIHWLMAALTFTKSVSLLFHSINYYFINSQGHPIEGLAVMHYITHLLKGALLFITIALIGSGWAFVKYVLSDKEKKIFGIVIPLQVLANVAYIVMESREEGASDYGIWKEILFLVDLICCGTILFPVVWSIRHLQDASGTDGKVAVNLAKLKLFRHYYVMVICYIYFTRIIAILLRAVVPFQWQWLYQLLVEGSTLAFFVLTGYKFQPARDNPYLQLPQEDEEGMQIEQVMTDSGFREGLSKVNKTASGRELL</sequence>
<proteinExistence type="evidence at transcript level"/>
<feature type="signal peptide" evidence="3">
    <location>
        <begin position="1"/>
        <end position="32"/>
    </location>
</feature>
<feature type="chain" id="PRO_0000278794" description="Protein GPR108">
    <location>
        <begin position="33"/>
        <end position="548"/>
    </location>
</feature>
<feature type="transmembrane region" description="Helical" evidence="3">
    <location>
        <begin position="268"/>
        <end position="288"/>
    </location>
</feature>
<feature type="transmembrane region" description="Helical" evidence="3">
    <location>
        <begin position="297"/>
        <end position="317"/>
    </location>
</feature>
<feature type="transmembrane region" description="Helical" evidence="3">
    <location>
        <begin position="341"/>
        <end position="361"/>
    </location>
</feature>
<feature type="transmembrane region" description="Helical" evidence="3">
    <location>
        <begin position="372"/>
        <end position="392"/>
    </location>
</feature>
<feature type="transmembrane region" description="Helical" evidence="3">
    <location>
        <begin position="406"/>
        <end position="426"/>
    </location>
</feature>
<feature type="transmembrane region" description="Helical" evidence="3">
    <location>
        <begin position="454"/>
        <end position="474"/>
    </location>
</feature>
<feature type="transmembrane region" description="Helical" evidence="3">
    <location>
        <begin position="478"/>
        <end position="498"/>
    </location>
</feature>
<feature type="region of interest" description="Disordered" evidence="4">
    <location>
        <begin position="165"/>
        <end position="190"/>
    </location>
</feature>
<feature type="glycosylation site" description="N-linked (GlcNAc...) asparagine" evidence="3">
    <location>
        <position position="57"/>
    </location>
</feature>
<feature type="glycosylation site" description="N-linked (GlcNAc...) asparagine" evidence="3">
    <location>
        <position position="63"/>
    </location>
</feature>
<feature type="glycosylation site" description="N-linked (GlcNAc...) asparagine" evidence="3">
    <location>
        <position position="109"/>
    </location>
</feature>
<feature type="glycosylation site" description="N-linked (GlcNAc...) asparagine" evidence="3">
    <location>
        <position position="205"/>
    </location>
</feature>
<feature type="glycosylation site" description="N-linked (GlcNAc...) asparagine" evidence="3">
    <location>
        <position position="209"/>
    </location>
</feature>
<feature type="glycosylation site" description="N-linked (GlcNAc...) asparagine" evidence="3">
    <location>
        <position position="539"/>
    </location>
</feature>
<feature type="sequence conflict" description="In Ref. 2; ABG67082." evidence="5" ref="2">
    <original>G</original>
    <variation>D</variation>
    <location>
        <position position="53"/>
    </location>
</feature>
<protein>
    <recommendedName>
        <fullName>Protein GPR108</fullName>
    </recommendedName>
</protein>
<name>GP108_BOVIN</name>
<gene>
    <name type="primary">GPR108</name>
</gene>
<accession>Q148L1</accession>
<accession>Q0V8H5</accession>
<organism>
    <name type="scientific">Bos taurus</name>
    <name type="common">Bovine</name>
    <dbReference type="NCBI Taxonomy" id="9913"/>
    <lineage>
        <taxon>Eukaryota</taxon>
        <taxon>Metazoa</taxon>
        <taxon>Chordata</taxon>
        <taxon>Craniata</taxon>
        <taxon>Vertebrata</taxon>
        <taxon>Euteleostomi</taxon>
        <taxon>Mammalia</taxon>
        <taxon>Eutheria</taxon>
        <taxon>Laurasiatheria</taxon>
        <taxon>Artiodactyla</taxon>
        <taxon>Ruminantia</taxon>
        <taxon>Pecora</taxon>
        <taxon>Bovidae</taxon>
        <taxon>Bovinae</taxon>
        <taxon>Bos</taxon>
    </lineage>
</organism>
<evidence type="ECO:0000250" key="1">
    <source>
        <dbReference type="UniProtKB" id="Q91WD0"/>
    </source>
</evidence>
<evidence type="ECO:0000250" key="2">
    <source>
        <dbReference type="UniProtKB" id="Q9NPR9"/>
    </source>
</evidence>
<evidence type="ECO:0000255" key="3"/>
<evidence type="ECO:0000256" key="4">
    <source>
        <dbReference type="SAM" id="MobiDB-lite"/>
    </source>
</evidence>
<evidence type="ECO:0000305" key="5"/>